<reference key="1">
    <citation type="journal article" date="2005" name="Nature">
        <title>Generation and annotation of the DNA sequences of human chromosomes 2 and 4.</title>
        <authorList>
            <person name="Hillier L.W."/>
            <person name="Graves T.A."/>
            <person name="Fulton R.S."/>
            <person name="Fulton L.A."/>
            <person name="Pepin K.H."/>
            <person name="Minx P."/>
            <person name="Wagner-McPherson C."/>
            <person name="Layman D."/>
            <person name="Wylie K."/>
            <person name="Sekhon M."/>
            <person name="Becker M.C."/>
            <person name="Fewell G.A."/>
            <person name="Delehaunty K.D."/>
            <person name="Miner T.L."/>
            <person name="Nash W.E."/>
            <person name="Kremitzki C."/>
            <person name="Oddy L."/>
            <person name="Du H."/>
            <person name="Sun H."/>
            <person name="Bradshaw-Cordum H."/>
            <person name="Ali J."/>
            <person name="Carter J."/>
            <person name="Cordes M."/>
            <person name="Harris A."/>
            <person name="Isak A."/>
            <person name="van Brunt A."/>
            <person name="Nguyen C."/>
            <person name="Du F."/>
            <person name="Courtney L."/>
            <person name="Kalicki J."/>
            <person name="Ozersky P."/>
            <person name="Abbott S."/>
            <person name="Armstrong J."/>
            <person name="Belter E.A."/>
            <person name="Caruso L."/>
            <person name="Cedroni M."/>
            <person name="Cotton M."/>
            <person name="Davidson T."/>
            <person name="Desai A."/>
            <person name="Elliott G."/>
            <person name="Erb T."/>
            <person name="Fronick C."/>
            <person name="Gaige T."/>
            <person name="Haakenson W."/>
            <person name="Haglund K."/>
            <person name="Holmes A."/>
            <person name="Harkins R."/>
            <person name="Kim K."/>
            <person name="Kruchowski S.S."/>
            <person name="Strong C.M."/>
            <person name="Grewal N."/>
            <person name="Goyea E."/>
            <person name="Hou S."/>
            <person name="Levy A."/>
            <person name="Martinka S."/>
            <person name="Mead K."/>
            <person name="McLellan M.D."/>
            <person name="Meyer R."/>
            <person name="Randall-Maher J."/>
            <person name="Tomlinson C."/>
            <person name="Dauphin-Kohlberg S."/>
            <person name="Kozlowicz-Reilly A."/>
            <person name="Shah N."/>
            <person name="Swearengen-Shahid S."/>
            <person name="Snider J."/>
            <person name="Strong J.T."/>
            <person name="Thompson J."/>
            <person name="Yoakum M."/>
            <person name="Leonard S."/>
            <person name="Pearman C."/>
            <person name="Trani L."/>
            <person name="Radionenko M."/>
            <person name="Waligorski J.E."/>
            <person name="Wang C."/>
            <person name="Rock S.M."/>
            <person name="Tin-Wollam A.-M."/>
            <person name="Maupin R."/>
            <person name="Latreille P."/>
            <person name="Wendl M.C."/>
            <person name="Yang S.-P."/>
            <person name="Pohl C."/>
            <person name="Wallis J.W."/>
            <person name="Spieth J."/>
            <person name="Bieri T.A."/>
            <person name="Berkowicz N."/>
            <person name="Nelson J.O."/>
            <person name="Osborne J."/>
            <person name="Ding L."/>
            <person name="Meyer R."/>
            <person name="Sabo A."/>
            <person name="Shotland Y."/>
            <person name="Sinha P."/>
            <person name="Wohldmann P.E."/>
            <person name="Cook L.L."/>
            <person name="Hickenbotham M.T."/>
            <person name="Eldred J."/>
            <person name="Williams D."/>
            <person name="Jones T.A."/>
            <person name="She X."/>
            <person name="Ciccarelli F.D."/>
            <person name="Izaurralde E."/>
            <person name="Taylor J."/>
            <person name="Schmutz J."/>
            <person name="Myers R.M."/>
            <person name="Cox D.R."/>
            <person name="Huang X."/>
            <person name="McPherson J.D."/>
            <person name="Mardis E.R."/>
            <person name="Clifton S.W."/>
            <person name="Warren W.C."/>
            <person name="Chinwalla A.T."/>
            <person name="Eddy S.R."/>
            <person name="Marra M.A."/>
            <person name="Ovcharenko I."/>
            <person name="Furey T.S."/>
            <person name="Miller W."/>
            <person name="Eichler E.E."/>
            <person name="Bork P."/>
            <person name="Suyama M."/>
            <person name="Torrents D."/>
            <person name="Waterston R.H."/>
            <person name="Wilson R.K."/>
        </authorList>
    </citation>
    <scope>NUCLEOTIDE SEQUENCE [LARGE SCALE GENOMIC DNA]</scope>
</reference>
<reference key="2">
    <citation type="journal article" date="2001" name="Nat. Genet.">
        <title>A gene encoding a putative GTPase regulator is mutated in familial amyotrophic lateral sclerosis 2.</title>
        <authorList>
            <person name="Hadano S."/>
            <person name="Hand C.K."/>
            <person name="Osuga H."/>
            <person name="Yanagisawa Y."/>
            <person name="Otomo A."/>
            <person name="Devon R.S."/>
            <person name="Miyamoto N."/>
            <person name="Showguchi-Miyata J."/>
            <person name="Okada Y."/>
            <person name="Singaraja R."/>
            <person name="Figlewicz D.A."/>
            <person name="Kwiatkowski T."/>
            <person name="Hosler B.A."/>
            <person name="Sagie T."/>
            <person name="Skaug J."/>
            <person name="Nasir J."/>
            <person name="Brown R.H. Jr."/>
            <person name="Scherer S.W."/>
            <person name="Rouleau G.A."/>
            <person name="Hayden M.R."/>
            <person name="Ikeda J.-E."/>
        </authorList>
    </citation>
    <scope>NUCLEOTIDE SEQUENCE [MRNA] OF 1-132 AND 2473-2694 (ISOFORM 2)</scope>
</reference>
<reference key="3">
    <citation type="journal article" date="2004" name="Nat. Genet.">
        <title>Complete sequencing and characterization of 21,243 full-length human cDNAs.</title>
        <authorList>
            <person name="Ota T."/>
            <person name="Suzuki Y."/>
            <person name="Nishikawa T."/>
            <person name="Otsuki T."/>
            <person name="Sugiyama T."/>
            <person name="Irie R."/>
            <person name="Wakamatsu A."/>
            <person name="Hayashi K."/>
            <person name="Sato H."/>
            <person name="Nagai K."/>
            <person name="Kimura K."/>
            <person name="Makita H."/>
            <person name="Sekine M."/>
            <person name="Obayashi M."/>
            <person name="Nishi T."/>
            <person name="Shibahara T."/>
            <person name="Tanaka T."/>
            <person name="Ishii S."/>
            <person name="Yamamoto J."/>
            <person name="Saito K."/>
            <person name="Kawai Y."/>
            <person name="Isono Y."/>
            <person name="Nakamura Y."/>
            <person name="Nagahari K."/>
            <person name="Murakami K."/>
            <person name="Yasuda T."/>
            <person name="Iwayanagi T."/>
            <person name="Wagatsuma M."/>
            <person name="Shiratori A."/>
            <person name="Sudo H."/>
            <person name="Hosoiri T."/>
            <person name="Kaku Y."/>
            <person name="Kodaira H."/>
            <person name="Kondo H."/>
            <person name="Sugawara M."/>
            <person name="Takahashi M."/>
            <person name="Kanda K."/>
            <person name="Yokoi T."/>
            <person name="Furuya T."/>
            <person name="Kikkawa E."/>
            <person name="Omura Y."/>
            <person name="Abe K."/>
            <person name="Kamihara K."/>
            <person name="Katsuta N."/>
            <person name="Sato K."/>
            <person name="Tanikawa M."/>
            <person name="Yamazaki M."/>
            <person name="Ninomiya K."/>
            <person name="Ishibashi T."/>
            <person name="Yamashita H."/>
            <person name="Murakawa K."/>
            <person name="Fujimori K."/>
            <person name="Tanai H."/>
            <person name="Kimata M."/>
            <person name="Watanabe M."/>
            <person name="Hiraoka S."/>
            <person name="Chiba Y."/>
            <person name="Ishida S."/>
            <person name="Ono Y."/>
            <person name="Takiguchi S."/>
            <person name="Watanabe S."/>
            <person name="Yosida M."/>
            <person name="Hotuta T."/>
            <person name="Kusano J."/>
            <person name="Kanehori K."/>
            <person name="Takahashi-Fujii A."/>
            <person name="Hara H."/>
            <person name="Tanase T.-O."/>
            <person name="Nomura Y."/>
            <person name="Togiya S."/>
            <person name="Komai F."/>
            <person name="Hara R."/>
            <person name="Takeuchi K."/>
            <person name="Arita M."/>
            <person name="Imose N."/>
            <person name="Musashino K."/>
            <person name="Yuuki H."/>
            <person name="Oshima A."/>
            <person name="Sasaki N."/>
            <person name="Aotsuka S."/>
            <person name="Yoshikawa Y."/>
            <person name="Matsunawa H."/>
            <person name="Ichihara T."/>
            <person name="Shiohata N."/>
            <person name="Sano S."/>
            <person name="Moriya S."/>
            <person name="Momiyama H."/>
            <person name="Satoh N."/>
            <person name="Takami S."/>
            <person name="Terashima Y."/>
            <person name="Suzuki O."/>
            <person name="Nakagawa S."/>
            <person name="Senoh A."/>
            <person name="Mizoguchi H."/>
            <person name="Goto Y."/>
            <person name="Shimizu F."/>
            <person name="Wakebe H."/>
            <person name="Hishigaki H."/>
            <person name="Watanabe T."/>
            <person name="Sugiyama A."/>
            <person name="Takemoto M."/>
            <person name="Kawakami B."/>
            <person name="Yamazaki M."/>
            <person name="Watanabe K."/>
            <person name="Kumagai A."/>
            <person name="Itakura S."/>
            <person name="Fukuzumi Y."/>
            <person name="Fujimori Y."/>
            <person name="Komiyama M."/>
            <person name="Tashiro H."/>
            <person name="Tanigami A."/>
            <person name="Fujiwara T."/>
            <person name="Ono T."/>
            <person name="Yamada K."/>
            <person name="Fujii Y."/>
            <person name="Ozaki K."/>
            <person name="Hirao M."/>
            <person name="Ohmori Y."/>
            <person name="Kawabata A."/>
            <person name="Hikiji T."/>
            <person name="Kobatake N."/>
            <person name="Inagaki H."/>
            <person name="Ikema Y."/>
            <person name="Okamoto S."/>
            <person name="Okitani R."/>
            <person name="Kawakami T."/>
            <person name="Noguchi S."/>
            <person name="Itoh T."/>
            <person name="Shigeta K."/>
            <person name="Senba T."/>
            <person name="Matsumura K."/>
            <person name="Nakajima Y."/>
            <person name="Mizuno T."/>
            <person name="Morinaga M."/>
            <person name="Sasaki M."/>
            <person name="Togashi T."/>
            <person name="Oyama M."/>
            <person name="Hata H."/>
            <person name="Watanabe M."/>
            <person name="Komatsu T."/>
            <person name="Mizushima-Sugano J."/>
            <person name="Satoh T."/>
            <person name="Shirai Y."/>
            <person name="Takahashi Y."/>
            <person name="Nakagawa K."/>
            <person name="Okumura K."/>
            <person name="Nagase T."/>
            <person name="Nomura N."/>
            <person name="Kikuchi H."/>
            <person name="Masuho Y."/>
            <person name="Yamashita R."/>
            <person name="Nakai K."/>
            <person name="Yada T."/>
            <person name="Nakamura Y."/>
            <person name="Ohara O."/>
            <person name="Isogai T."/>
            <person name="Sugano S."/>
        </authorList>
    </citation>
    <scope>NUCLEOTIDE SEQUENCE [LARGE SCALE MRNA] OF 1268-2694 (ISOFORM 1)</scope>
    <scope>NUCLEOTIDE SEQUENCE [LARGE SCALE MRNA] OF 81-366 AND 1692-2694 (ISOFORM 2)</scope>
    <source>
        <tissue>Brain</tissue>
        <tissue>Lung</tissue>
        <tissue>Trachea</tissue>
    </source>
</reference>
<reference key="4">
    <citation type="journal article" date="2004" name="Brain Res. Mol. Brain Res.">
        <title>Identification and characterization of NBEAL1, a novel human neurobeachin-like 1 protein gene from fetal brain, which is up regulated in glioma.</title>
        <authorList>
            <person name="Chen J."/>
            <person name="Lu Y."/>
            <person name="Xu J."/>
            <person name="Huang Y."/>
            <person name="Cheng H."/>
            <person name="Hu G."/>
            <person name="Luo C."/>
            <person name="Lou M."/>
            <person name="Cao G."/>
            <person name="Xie Y."/>
            <person name="Ying K."/>
        </authorList>
    </citation>
    <scope>NUCLEOTIDE SEQUENCE [MRNA] OF 1588-2694 (ISOFORM 2)</scope>
    <scope>TISSUE SPECIFICITY</scope>
    <source>
        <tissue>Fetal brain</tissue>
    </source>
</reference>
<evidence type="ECO:0000255" key="1">
    <source>
        <dbReference type="PROSITE-ProRule" id="PRU00026"/>
    </source>
</evidence>
<evidence type="ECO:0000255" key="2">
    <source>
        <dbReference type="PROSITE-ProRule" id="PRU01119"/>
    </source>
</evidence>
<evidence type="ECO:0000256" key="3">
    <source>
        <dbReference type="SAM" id="MobiDB-lite"/>
    </source>
</evidence>
<evidence type="ECO:0000269" key="4">
    <source>
    </source>
</evidence>
<evidence type="ECO:0000303" key="5">
    <source>
    </source>
</evidence>
<evidence type="ECO:0000305" key="6"/>
<feature type="chain" id="PRO_0000051094" description="Neurobeachin-like protein 1">
    <location>
        <begin position="1"/>
        <end position="2694"/>
    </location>
</feature>
<feature type="domain" description="BEACH-type PH" evidence="2">
    <location>
        <begin position="1883"/>
        <end position="1980"/>
    </location>
</feature>
<feature type="domain" description="BEACH" evidence="1">
    <location>
        <begin position="1992"/>
        <end position="2284"/>
    </location>
</feature>
<feature type="repeat" description="WD 1">
    <location>
        <begin position="2439"/>
        <end position="2478"/>
    </location>
</feature>
<feature type="repeat" description="WD 2">
    <location>
        <begin position="2490"/>
        <end position="2531"/>
    </location>
</feature>
<feature type="region of interest" description="Disordered" evidence="3">
    <location>
        <begin position="1289"/>
        <end position="1314"/>
    </location>
</feature>
<feature type="region of interest" description="Disordered" evidence="3">
    <location>
        <begin position="1330"/>
        <end position="1350"/>
    </location>
</feature>
<feature type="region of interest" description="Disordered" evidence="3">
    <location>
        <begin position="1381"/>
        <end position="1411"/>
    </location>
</feature>
<feature type="compositionally biased region" description="Basic and acidic residues" evidence="3">
    <location>
        <begin position="1290"/>
        <end position="1314"/>
    </location>
</feature>
<feature type="compositionally biased region" description="Polar residues" evidence="3">
    <location>
        <begin position="1383"/>
        <end position="1409"/>
    </location>
</feature>
<feature type="splice variant" id="VSP_039337" description="In isoform 1." evidence="5">
    <location>
        <begin position="2279"/>
        <end position="2347"/>
    </location>
</feature>
<feature type="splice variant" id="VSP_039338" description="In isoform 1." evidence="5">
    <location>
        <begin position="2522"/>
        <end position="2542"/>
    </location>
</feature>
<feature type="sequence conflict" description="In Ref. 3; BAC87125." evidence="6" ref="3">
    <original>Q</original>
    <variation>R</variation>
    <location>
        <position position="1763"/>
    </location>
</feature>
<feature type="sequence conflict" description="In Ref. 3; BAC87543 and 4; AAO45288." evidence="6" ref="3 4">
    <original>I</original>
    <variation>V</variation>
    <location>
        <position position="2330"/>
    </location>
</feature>
<protein>
    <recommendedName>
        <fullName>Neurobeachin-like protein 1</fullName>
    </recommendedName>
    <alternativeName>
        <fullName>Amyotrophic lateral sclerosis 2 chromosomal region candidate gene 16 protein</fullName>
    </alternativeName>
    <alternativeName>
        <fullName>Amyotrophic lateral sclerosis 2 chromosomal region candidate gene 17 protein</fullName>
    </alternativeName>
</protein>
<dbReference type="EMBL" id="AC011737">
    <property type="status" value="NOT_ANNOTATED_CDS"/>
    <property type="molecule type" value="Genomic_DNA"/>
</dbReference>
<dbReference type="EMBL" id="AB053318">
    <property type="protein sequence ID" value="BAB69026.1"/>
    <property type="molecule type" value="mRNA"/>
</dbReference>
<dbReference type="EMBL" id="AB053319">
    <property type="protein sequence ID" value="BAB69027.1"/>
    <property type="status" value="ALT_SEQ"/>
    <property type="molecule type" value="mRNA"/>
</dbReference>
<dbReference type="EMBL" id="AK127772">
    <property type="protein sequence ID" value="BAC87125.1"/>
    <property type="status" value="ALT_INIT"/>
    <property type="molecule type" value="mRNA"/>
</dbReference>
<dbReference type="EMBL" id="AK128636">
    <property type="protein sequence ID" value="BAC87543.1"/>
    <property type="status" value="ALT_INIT"/>
    <property type="molecule type" value="mRNA"/>
</dbReference>
<dbReference type="EMBL" id="AK130065">
    <property type="protein sequence ID" value="BAC85289.1"/>
    <property type="status" value="ALT_INIT"/>
    <property type="molecule type" value="mRNA"/>
</dbReference>
<dbReference type="EMBL" id="AY172970">
    <property type="protein sequence ID" value="AAO45288.1"/>
    <property type="status" value="ALT_FRAME"/>
    <property type="molecule type" value="mRNA"/>
</dbReference>
<dbReference type="CCDS" id="CCDS46495.1">
    <molecule id="Q6ZS30-2"/>
</dbReference>
<dbReference type="RefSeq" id="NP_001107604.1">
    <molecule id="Q6ZS30-2"/>
    <property type="nucleotide sequence ID" value="NM_001114132.2"/>
</dbReference>
<dbReference type="SMR" id="Q6ZS30"/>
<dbReference type="BioGRID" id="122383">
    <property type="interactions" value="26"/>
</dbReference>
<dbReference type="FunCoup" id="Q6ZS30">
    <property type="interactions" value="1382"/>
</dbReference>
<dbReference type="IntAct" id="Q6ZS30">
    <property type="interactions" value="20"/>
</dbReference>
<dbReference type="STRING" id="9606.ENSP00000399903"/>
<dbReference type="GlyGen" id="Q6ZS30">
    <property type="glycosylation" value="6 sites, 1 N-linked glycan (1 site), 1 O-linked glycan (2 sites)"/>
</dbReference>
<dbReference type="iPTMnet" id="Q6ZS30"/>
<dbReference type="PhosphoSitePlus" id="Q6ZS30"/>
<dbReference type="BioMuta" id="NBEAL1"/>
<dbReference type="DMDM" id="298286908"/>
<dbReference type="jPOST" id="Q6ZS30"/>
<dbReference type="MassIVE" id="Q6ZS30"/>
<dbReference type="PaxDb" id="9606-ENSP00000399903"/>
<dbReference type="PeptideAtlas" id="Q6ZS30"/>
<dbReference type="ProteomicsDB" id="68187">
    <molecule id="Q6ZS30-2"/>
</dbReference>
<dbReference type="ProteomicsDB" id="68188">
    <molecule id="Q6ZS30-1"/>
</dbReference>
<dbReference type="Pumba" id="Q6ZS30"/>
<dbReference type="Antibodypedia" id="34160">
    <property type="antibodies" value="72 antibodies from 20 providers"/>
</dbReference>
<dbReference type="DNASU" id="65065"/>
<dbReference type="Ensembl" id="ENST00000449802.5">
    <molecule id="Q6ZS30-2"/>
    <property type="protein sequence ID" value="ENSP00000399903.1"/>
    <property type="gene ID" value="ENSG00000144426.19"/>
</dbReference>
<dbReference type="GeneID" id="65065"/>
<dbReference type="KEGG" id="hsa:65065"/>
<dbReference type="UCSC" id="uc002uzt.4">
    <molecule id="Q6ZS30-2"/>
    <property type="organism name" value="human"/>
</dbReference>
<dbReference type="AGR" id="HGNC:20681"/>
<dbReference type="CTD" id="65065"/>
<dbReference type="DisGeNET" id="65065"/>
<dbReference type="GeneCards" id="NBEAL1"/>
<dbReference type="HGNC" id="HGNC:20681">
    <property type="gene designation" value="NBEAL1"/>
</dbReference>
<dbReference type="HPA" id="ENSG00000144426">
    <property type="expression patterns" value="Low tissue specificity"/>
</dbReference>
<dbReference type="MIM" id="609816">
    <property type="type" value="gene"/>
</dbReference>
<dbReference type="neXtProt" id="NX_Q6ZS30"/>
<dbReference type="OpenTargets" id="ENSG00000144426"/>
<dbReference type="PharmGKB" id="PA24740"/>
<dbReference type="VEuPathDB" id="HostDB:ENSG00000144426"/>
<dbReference type="eggNOG" id="KOG1787">
    <property type="taxonomic scope" value="Eukaryota"/>
</dbReference>
<dbReference type="GeneTree" id="ENSGT00940000155041"/>
<dbReference type="HOGENOM" id="CLU_000218_0_0_1"/>
<dbReference type="InParanoid" id="Q6ZS30"/>
<dbReference type="OMA" id="IVFKVME"/>
<dbReference type="OrthoDB" id="26681at2759"/>
<dbReference type="PAN-GO" id="Q6ZS30">
    <property type="GO annotations" value="4 GO annotations based on evolutionary models"/>
</dbReference>
<dbReference type="PhylomeDB" id="Q6ZS30"/>
<dbReference type="TreeFam" id="TF323165"/>
<dbReference type="PathwayCommons" id="Q6ZS30"/>
<dbReference type="SignaLink" id="Q6ZS30"/>
<dbReference type="BioGRID-ORCS" id="65065">
    <property type="hits" value="221 hits in 1153 CRISPR screens"/>
</dbReference>
<dbReference type="ChiTaRS" id="NBEAL1">
    <property type="organism name" value="human"/>
</dbReference>
<dbReference type="GenomeRNAi" id="65065"/>
<dbReference type="Pharos" id="Q6ZS30">
    <property type="development level" value="Tbio"/>
</dbReference>
<dbReference type="PRO" id="PR:Q6ZS30"/>
<dbReference type="Proteomes" id="UP000005640">
    <property type="component" value="Chromosome 2"/>
</dbReference>
<dbReference type="RNAct" id="Q6ZS30">
    <property type="molecule type" value="protein"/>
</dbReference>
<dbReference type="Bgee" id="ENSG00000144426">
    <property type="expression patterns" value="Expressed in colonic epithelium and 176 other cell types or tissues"/>
</dbReference>
<dbReference type="ExpressionAtlas" id="Q6ZS30">
    <property type="expression patterns" value="baseline and differential"/>
</dbReference>
<dbReference type="GO" id="GO:0005829">
    <property type="term" value="C:cytosol"/>
    <property type="evidence" value="ECO:0000318"/>
    <property type="project" value="GO_Central"/>
</dbReference>
<dbReference type="GO" id="GO:0016020">
    <property type="term" value="C:membrane"/>
    <property type="evidence" value="ECO:0000318"/>
    <property type="project" value="GO_Central"/>
</dbReference>
<dbReference type="GO" id="GO:0019901">
    <property type="term" value="F:protein kinase binding"/>
    <property type="evidence" value="ECO:0000318"/>
    <property type="project" value="GO_Central"/>
</dbReference>
<dbReference type="GO" id="GO:0008104">
    <property type="term" value="P:protein localization"/>
    <property type="evidence" value="ECO:0000318"/>
    <property type="project" value="GO_Central"/>
</dbReference>
<dbReference type="CDD" id="cd06071">
    <property type="entry name" value="Beach"/>
    <property type="match status" value="1"/>
</dbReference>
<dbReference type="CDD" id="cd01201">
    <property type="entry name" value="PH_BEACH"/>
    <property type="match status" value="1"/>
</dbReference>
<dbReference type="FunFam" id="1.10.1540.10:FF:000001">
    <property type="entry name" value="neurobeachin isoform X1"/>
    <property type="match status" value="1"/>
</dbReference>
<dbReference type="Gene3D" id="2.60.120.200">
    <property type="match status" value="1"/>
</dbReference>
<dbReference type="Gene3D" id="1.10.1540.10">
    <property type="entry name" value="BEACH domain"/>
    <property type="match status" value="1"/>
</dbReference>
<dbReference type="Gene3D" id="2.30.29.30">
    <property type="entry name" value="Pleckstrin-homology domain (PH domain)/Phosphotyrosine-binding domain (PTB)"/>
    <property type="match status" value="1"/>
</dbReference>
<dbReference type="Gene3D" id="2.130.10.10">
    <property type="entry name" value="YVTN repeat-like/Quinoprotein amine dehydrogenase"/>
    <property type="match status" value="1"/>
</dbReference>
<dbReference type="InterPro" id="IPR016024">
    <property type="entry name" value="ARM-type_fold"/>
</dbReference>
<dbReference type="InterPro" id="IPR000409">
    <property type="entry name" value="BEACH_dom"/>
</dbReference>
<dbReference type="InterPro" id="IPR036372">
    <property type="entry name" value="BEACH_dom_sf"/>
</dbReference>
<dbReference type="InterPro" id="IPR050865">
    <property type="entry name" value="BEACH_Domain"/>
</dbReference>
<dbReference type="InterPro" id="IPR013320">
    <property type="entry name" value="ConA-like_dom_sf"/>
</dbReference>
<dbReference type="InterPro" id="IPR046851">
    <property type="entry name" value="NBCH_WD40"/>
</dbReference>
<dbReference type="InterPro" id="IPR031570">
    <property type="entry name" value="NBEA/BDCP_DUF4704"/>
</dbReference>
<dbReference type="InterPro" id="IPR023362">
    <property type="entry name" value="PH-BEACH_dom"/>
</dbReference>
<dbReference type="InterPro" id="IPR011993">
    <property type="entry name" value="PH-like_dom_sf"/>
</dbReference>
<dbReference type="InterPro" id="IPR015943">
    <property type="entry name" value="WD40/YVTN_repeat-like_dom_sf"/>
</dbReference>
<dbReference type="InterPro" id="IPR036322">
    <property type="entry name" value="WD40_repeat_dom_sf"/>
</dbReference>
<dbReference type="InterPro" id="IPR001680">
    <property type="entry name" value="WD40_rpt"/>
</dbReference>
<dbReference type="PANTHER" id="PTHR13743">
    <property type="entry name" value="BEIGE/BEACH-RELATED"/>
    <property type="match status" value="1"/>
</dbReference>
<dbReference type="PANTHER" id="PTHR13743:SF115">
    <property type="entry name" value="NEUROBEACHIN-LIKE PROTEIN 1"/>
    <property type="match status" value="1"/>
</dbReference>
<dbReference type="Pfam" id="PF02138">
    <property type="entry name" value="Beach"/>
    <property type="match status" value="1"/>
</dbReference>
<dbReference type="Pfam" id="PF15787">
    <property type="entry name" value="DUF4704"/>
    <property type="match status" value="1"/>
</dbReference>
<dbReference type="Pfam" id="PF16057">
    <property type="entry name" value="DUF4800"/>
    <property type="match status" value="1"/>
</dbReference>
<dbReference type="Pfam" id="PF20426">
    <property type="entry name" value="NBCH_WD40"/>
    <property type="match status" value="1"/>
</dbReference>
<dbReference type="Pfam" id="PF14844">
    <property type="entry name" value="PH_BEACH"/>
    <property type="match status" value="1"/>
</dbReference>
<dbReference type="SMART" id="SM01026">
    <property type="entry name" value="Beach"/>
    <property type="match status" value="1"/>
</dbReference>
<dbReference type="SMART" id="SM00320">
    <property type="entry name" value="WD40"/>
    <property type="match status" value="3"/>
</dbReference>
<dbReference type="SUPFAM" id="SSF48371">
    <property type="entry name" value="ARM repeat"/>
    <property type="match status" value="1"/>
</dbReference>
<dbReference type="SUPFAM" id="SSF81837">
    <property type="entry name" value="BEACH domain"/>
    <property type="match status" value="1"/>
</dbReference>
<dbReference type="SUPFAM" id="SSF49899">
    <property type="entry name" value="Concanavalin A-like lectins/glucanases"/>
    <property type="match status" value="1"/>
</dbReference>
<dbReference type="SUPFAM" id="SSF50729">
    <property type="entry name" value="PH domain-like"/>
    <property type="match status" value="1"/>
</dbReference>
<dbReference type="SUPFAM" id="SSF50978">
    <property type="entry name" value="WD40 repeat-like"/>
    <property type="match status" value="1"/>
</dbReference>
<dbReference type="PROSITE" id="PS50197">
    <property type="entry name" value="BEACH"/>
    <property type="match status" value="1"/>
</dbReference>
<dbReference type="PROSITE" id="PS51783">
    <property type="entry name" value="PH_BEACH"/>
    <property type="match status" value="1"/>
</dbReference>
<dbReference type="PROSITE" id="PS50082">
    <property type="entry name" value="WD_REPEATS_2"/>
    <property type="match status" value="1"/>
</dbReference>
<dbReference type="PROSITE" id="PS50294">
    <property type="entry name" value="WD_REPEATS_REGION"/>
    <property type="match status" value="1"/>
</dbReference>
<proteinExistence type="evidence at protein level"/>
<keyword id="KW-0025">Alternative splicing</keyword>
<keyword id="KW-1267">Proteomics identification</keyword>
<keyword id="KW-1185">Reference proteome</keyword>
<keyword id="KW-0677">Repeat</keyword>
<keyword id="KW-0853">WD repeat</keyword>
<name>NBEL1_HUMAN</name>
<sequence>MASRERLFELWMLYCTKKDPDYLKLWLDTFVSSYEQFLDVDFEKLPTRVDDMPPGISLLPDNILQVLRIQLLQCVQKMADGLEEQQQALSILLVKFFIILCRNLSNVEEIGTCSYINYVITMTTLYIQQLKSKKKEKEMADQTCIEEFVIHALAFCESLYDPYRNWRHRISGRILSTVEKSRQKYKPASLTVEFVPFFYQCFQESEHLKESLKCCLLHLFGAIVAGGQRNALQAISPATMEVLMRVLADCDSWEDGDPEEVGRKAELTLKCLTEVVHILLSSNSDQRQVETSTILENYFKLLNSDHSALPNQRRSRQWENRFIALQIKMLNTITAMLDCTDRPVLQAIFLNSNCFEHLIRLLQNCKVFQGQLDCLAISTIQALTAVMNKSPAAKEVFKERIGYTHMLEVLKSLGQPPLELLKELMNMAVEGDHTSVGILGISNVQPLLLLIQWLPELQSHDLQIFISDWLKRICCINRQSRTTCVNANMGIRIIETLDLHSSLHQTCAENLIAIHGSLGSQSVSSEEIRRLLRLLRVDESESVHPYVTPVTRAILTMARKLSLESALQYFNLSHSMAGISVPPIQKWPGSAFSFSAWFCLDQDQLTLGIANKGGKRKQLYSFFTGSGMGFEAFITHSGMLVVAVCTKREYATVMLPDHSFCDSLWHNITVVHMPGKRPFGQSFVYIYDNGQQKVSAPLRFPAMNEPFTSCCIGSAGQRTTTPPPSQIPDPPFSSPITPHRTSFGGILSSASWGGTIEKSKLITKLISAGTQDSEWGCPTSLEGQLGSVIIFYEPLQPPQVKALYLAGPNCLSPWKCQESDMADLPGNILLYYTAKACKNSICLDLSTNCLHGRLTGNKVVNWDIKDIINCIGGLNVLFPLLEQISHFSEGQIPEEKNESTVPESVTPVEGDWLVWTSTKASESRLERNLVATFILIVKHFIQRHPINQGNLIHSHGVATLGALLQKVPSTLMDVNVLMAVQLLIEQVSLEKNMQLLQQMYQYLLFDFRIWNRGDFPFRIGHIQYLSTIIKDSRRVFRKKYGVQFLLDTLRIYYGNGCKYNELSLDDIRTIRTSLYGLIKYFLCKGGSHEEIQSIMGYIAATNEEEQLFGILDVLFSLLRTSPTRGQLFLLLFEPGNADILYALLLNQKYSDRLREIIFKIMEQMLKCTNVYERSKQHIRLREVGYSGLGLLLNEALVNTSLIKNLTHQIINTDPVINFKDLLSVVYISHRAHINVRVAICRKVLQILQFQPDAAHQISQQVGWQDTLVRLFLKAKFENGNTLHKHSRAVLMKDNDKNMSTEDTKKNSDEKTDEEKITSFASANVSSDQWSLEDRHSLDSNTPLFPEDSSVGELSFKSENQEEFWHSNPSHLSLDLSGIDSCEMSDSGSQVPDSLPSTPSPVESTKSFSVHSDRESSITNDMGFSDDFSLLESQERCEEELLQLLTHILNYVMCKGLEKSDDDTWIERGQVFSALSKPGISSELLRPSDEIKLTLLQKMLEWAISENREAKTNPVTAENAFRLVLIIQDFLQSEGLVNSNMWTEKLLEDMMLLFDCLSVCYSESPVWVKLSQIQIQLLLGFIGRGNLQVCAMASAKLNTLLQTKVIENQDEACYILGKLEHVLSQSIKEQTEIYSFLIPLVRTLVSKIYELLFMNLHLPSLPFTNGSSSFFEDFQEYCNSNEWQVYIEKYIVPYMKQYEAHTFYDGHENMALYWKDCYEALMVNMHKRDREGGESKLKFQELFVEPFNRKARQENLRYNNMLKQLSSQQLATLRRWKAIQLYLTCERGPWAKRKQNPIHWKLANVENYSRMRLKLVPNYNFKTHEEASALRDNLGIQHSQPSSDTLLLEVVKQVKVSDMVEDKLDLPEEDITARVNVDEKEEQDQKEKLVLMEDCELITIIDVIPGRLEITTQHIYFYDGSIEKEDGVGFDFKWPHSQIREIHLRRYNLRRSALEIFHVDQSNYFLNFKKEVRNKIYSRLLSLHSPNSYYGSRSPQELFKASGLTQKWVNREISNFDYLIQINTMAGRTYNDLAQYPVFPWILQDYTSEELDLNNPAVFRDLSKPIGVVNEKNAKAMREKYENFEDPMGTIDKFHYGTHYSNSAGVMHYLIRVEPFTTLHIQLQSGRFDCADRQFHSIPATWQALMDNPYDVKELIPEFFYFPEFLENQNQFNLGRLQISKELVNDVILPKWAKSAEDFIYKHRKALESEYVSAHLHEWIDLIFGYKQRGPAAVEALNVFYYCSYEGAVDLDALTDEKERKALEGMINNFGQTPCQLLKEPHPPRLSAEEAVQKPTKIDTSTLNLFQHLPELKSFFIEGISDGIPLLKATIPKNQYRSFMSQGSPELLITISMNYVIGTHGWLPYDRNISNYFTFIKDQTVTNPKTQRSINGSFAPGLEITSKLFVVSHDAKLLFSAGYWDNSIQVMSLTKGKIISHIIRHMDIVTCLATDYCGIHLISGSRDTTCMIWQITQQGGVPVGLASKPFQILYGHTNEVLSVGISTELDMAVSGSRDGTVIIHTIQKGQYMRTLRPPCESSLFLTIPNLAISWEGHIVVYSSTEEKTTLKDKNALHLFSINGKYLGSQILKEQVSDICIIGEHIVTGSIQGFLSIRDLHSLNLSINPLAMRLPIHCVCVTKEYSHILVGLEDGKLIVVGVGKPAEMRSGQLSRKFWGSSKRLSQISAGETEYNTQDSK</sequence>
<comment type="alternative products">
    <event type="alternative splicing"/>
    <isoform>
        <id>Q6ZS30-2</id>
        <name>2</name>
        <sequence type="displayed"/>
    </isoform>
    <isoform>
        <id>Q6ZS30-1</id>
        <name>1</name>
        <sequence type="described" ref="VSP_039337 VSP_039338"/>
    </isoform>
</comment>
<comment type="tissue specificity">
    <text evidence="4">Highly expressed in brain, kidney, prostate and testis. Weakly expressed in ovary, small intestine, colon and peripheral blood leukocytes. May be correlative to several tumors, such as ovary serous adenocarcinoma and metastasis mammary gland carcinoma breast.</text>
</comment>
<comment type="similarity">
    <text evidence="6">Belongs to the WD repeat neurobeachin family.</text>
</comment>
<comment type="sequence caution" evidence="6">
    <conflict type="frameshift">
        <sequence resource="EMBL-CDS" id="AAO45288"/>
    </conflict>
</comment>
<comment type="sequence caution" evidence="6">
    <conflict type="erroneous termination">
        <sequence resource="EMBL-CDS" id="BAB69027"/>
    </conflict>
    <text>Extended C-terminus.</text>
</comment>
<comment type="sequence caution" evidence="6">
    <conflict type="erroneous initiation">
        <sequence resource="EMBL-CDS" id="BAC85289"/>
    </conflict>
    <text>Truncated N-terminus.</text>
</comment>
<comment type="sequence caution" evidence="6">
    <conflict type="erroneous initiation">
        <sequence resource="EMBL-CDS" id="BAC87125"/>
    </conflict>
    <text>Truncated N-terminus.</text>
</comment>
<comment type="sequence caution" evidence="6">
    <conflict type="erroneous initiation">
        <sequence resource="EMBL-CDS" id="BAC87543"/>
    </conflict>
    <text>Truncated N-terminus.</text>
</comment>
<gene>
    <name type="primary">NBEAL1</name>
    <name type="synonym">ALS2CR16</name>
    <name type="synonym">ALS2CR17</name>
</gene>
<organism>
    <name type="scientific">Homo sapiens</name>
    <name type="common">Human</name>
    <dbReference type="NCBI Taxonomy" id="9606"/>
    <lineage>
        <taxon>Eukaryota</taxon>
        <taxon>Metazoa</taxon>
        <taxon>Chordata</taxon>
        <taxon>Craniata</taxon>
        <taxon>Vertebrata</taxon>
        <taxon>Euteleostomi</taxon>
        <taxon>Mammalia</taxon>
        <taxon>Eutheria</taxon>
        <taxon>Euarchontoglires</taxon>
        <taxon>Primates</taxon>
        <taxon>Haplorrhini</taxon>
        <taxon>Catarrhini</taxon>
        <taxon>Hominidae</taxon>
        <taxon>Homo</taxon>
    </lineage>
</organism>
<accession>Q6ZS30</accession>
<accession>A6NHD5</accession>
<accession>Q6Y876</accession>
<accession>Q6ZP36</accession>
<accession>Q6ZQY5</accession>
<accession>Q8N8R4</accession>
<accession>Q96Q30</accession>
<accession>Q96Q31</accession>